<dbReference type="EC" id="2.3.2.36" evidence="2"/>
<dbReference type="EMBL" id="U43081">
    <property type="protein sequence ID" value="AAC49423.1"/>
    <property type="molecule type" value="Genomic_DNA"/>
</dbReference>
<dbReference type="EMBL" id="CR382132">
    <property type="protein sequence ID" value="CAG77647.1"/>
    <property type="molecule type" value="Genomic_DNA"/>
</dbReference>
<dbReference type="RefSeq" id="XP_504845.1">
    <property type="nucleotide sequence ID" value="XM_504845.1"/>
</dbReference>
<dbReference type="SMR" id="Q99155"/>
<dbReference type="FunCoup" id="Q99155">
    <property type="interactions" value="124"/>
</dbReference>
<dbReference type="STRING" id="284591.Q99155"/>
<dbReference type="EnsemblFungi" id="CAG77647">
    <property type="protein sequence ID" value="CAG77647"/>
    <property type="gene ID" value="YALI0_F01012g"/>
</dbReference>
<dbReference type="KEGG" id="yli:2908531"/>
<dbReference type="VEuPathDB" id="FungiDB:YALI0_F01012g"/>
<dbReference type="HOGENOM" id="CLU_024591_0_0_1"/>
<dbReference type="InParanoid" id="Q99155"/>
<dbReference type="OMA" id="WHGLMEL"/>
<dbReference type="OrthoDB" id="66189at4891"/>
<dbReference type="UniPathway" id="UPA00143"/>
<dbReference type="Proteomes" id="UP000001300">
    <property type="component" value="Chromosome F"/>
</dbReference>
<dbReference type="GO" id="GO:0005778">
    <property type="term" value="C:peroxisomal membrane"/>
    <property type="evidence" value="ECO:0007669"/>
    <property type="project" value="UniProtKB-SubCell"/>
</dbReference>
<dbReference type="GO" id="GO:0016740">
    <property type="term" value="F:transferase activity"/>
    <property type="evidence" value="ECO:0007669"/>
    <property type="project" value="UniProtKB-KW"/>
</dbReference>
<dbReference type="GO" id="GO:0008270">
    <property type="term" value="F:zinc ion binding"/>
    <property type="evidence" value="ECO:0007669"/>
    <property type="project" value="UniProtKB-KW"/>
</dbReference>
<dbReference type="GO" id="GO:0016562">
    <property type="term" value="P:protein import into peroxisome matrix, receptor recycling"/>
    <property type="evidence" value="ECO:0007669"/>
    <property type="project" value="UniProtKB-ARBA"/>
</dbReference>
<dbReference type="GO" id="GO:0016567">
    <property type="term" value="P:protein ubiquitination"/>
    <property type="evidence" value="ECO:0007669"/>
    <property type="project" value="UniProtKB-UniPathway"/>
</dbReference>
<dbReference type="Gene3D" id="3.30.40.10">
    <property type="entry name" value="Zinc/RING finger domain, C3HC4 (zinc finger)"/>
    <property type="match status" value="1"/>
</dbReference>
<dbReference type="InterPro" id="IPR025654">
    <property type="entry name" value="PEX2/10"/>
</dbReference>
<dbReference type="InterPro" id="IPR006845">
    <property type="entry name" value="Pex_N"/>
</dbReference>
<dbReference type="InterPro" id="IPR001841">
    <property type="entry name" value="Znf_RING"/>
</dbReference>
<dbReference type="InterPro" id="IPR013083">
    <property type="entry name" value="Znf_RING/FYVE/PHD"/>
</dbReference>
<dbReference type="InterPro" id="IPR017907">
    <property type="entry name" value="Znf_RING_CS"/>
</dbReference>
<dbReference type="PANTHER" id="PTHR48178">
    <property type="entry name" value="PEROXISOME BIOGENESIS FACTOR 2"/>
    <property type="match status" value="1"/>
</dbReference>
<dbReference type="PANTHER" id="PTHR48178:SF1">
    <property type="entry name" value="PEROXISOME BIOGENESIS FACTOR 2"/>
    <property type="match status" value="1"/>
</dbReference>
<dbReference type="Pfam" id="PF04757">
    <property type="entry name" value="Pex2_Pex12"/>
    <property type="match status" value="1"/>
</dbReference>
<dbReference type="SMART" id="SM00184">
    <property type="entry name" value="RING"/>
    <property type="match status" value="1"/>
</dbReference>
<dbReference type="SUPFAM" id="SSF57850">
    <property type="entry name" value="RING/U-box"/>
    <property type="match status" value="1"/>
</dbReference>
<dbReference type="PROSITE" id="PS00518">
    <property type="entry name" value="ZF_RING_1"/>
    <property type="match status" value="1"/>
</dbReference>
<dbReference type="PROSITE" id="PS50089">
    <property type="entry name" value="ZF_RING_2"/>
    <property type="match status" value="1"/>
</dbReference>
<proteinExistence type="inferred from homology"/>
<reference key="1">
    <citation type="journal article" date="1996" name="J. Biol. Chem.">
        <title>The Yarrowia lipolytica gene PAY5 encodes a peroxisomal integral membrane protein homologous to the mammalian peroxisome assembly factor PAF-1.</title>
        <authorList>
            <person name="Eitzen G.A."/>
            <person name="Titorenko V.I."/>
            <person name="Smith J.J."/>
            <person name="Veenhuis M."/>
            <person name="Szilard R.K."/>
            <person name="Rachubinski R.A."/>
        </authorList>
    </citation>
    <scope>NUCLEOTIDE SEQUENCE [GENOMIC DNA]</scope>
</reference>
<reference key="2">
    <citation type="journal article" date="2004" name="Nature">
        <title>Genome evolution in yeasts.</title>
        <authorList>
            <person name="Dujon B."/>
            <person name="Sherman D."/>
            <person name="Fischer G."/>
            <person name="Durrens P."/>
            <person name="Casaregola S."/>
            <person name="Lafontaine I."/>
            <person name="de Montigny J."/>
            <person name="Marck C."/>
            <person name="Neuveglise C."/>
            <person name="Talla E."/>
            <person name="Goffard N."/>
            <person name="Frangeul L."/>
            <person name="Aigle M."/>
            <person name="Anthouard V."/>
            <person name="Babour A."/>
            <person name="Barbe V."/>
            <person name="Barnay S."/>
            <person name="Blanchin S."/>
            <person name="Beckerich J.-M."/>
            <person name="Beyne E."/>
            <person name="Bleykasten C."/>
            <person name="Boisrame A."/>
            <person name="Boyer J."/>
            <person name="Cattolico L."/>
            <person name="Confanioleri F."/>
            <person name="de Daruvar A."/>
            <person name="Despons L."/>
            <person name="Fabre E."/>
            <person name="Fairhead C."/>
            <person name="Ferry-Dumazet H."/>
            <person name="Groppi A."/>
            <person name="Hantraye F."/>
            <person name="Hennequin C."/>
            <person name="Jauniaux N."/>
            <person name="Joyet P."/>
            <person name="Kachouri R."/>
            <person name="Kerrest A."/>
            <person name="Koszul R."/>
            <person name="Lemaire M."/>
            <person name="Lesur I."/>
            <person name="Ma L."/>
            <person name="Muller H."/>
            <person name="Nicaud J.-M."/>
            <person name="Nikolski M."/>
            <person name="Oztas S."/>
            <person name="Ozier-Kalogeropoulos O."/>
            <person name="Pellenz S."/>
            <person name="Potier S."/>
            <person name="Richard G.-F."/>
            <person name="Straub M.-L."/>
            <person name="Suleau A."/>
            <person name="Swennen D."/>
            <person name="Tekaia F."/>
            <person name="Wesolowski-Louvel M."/>
            <person name="Westhof E."/>
            <person name="Wirth B."/>
            <person name="Zeniou-Meyer M."/>
            <person name="Zivanovic Y."/>
            <person name="Bolotin-Fukuhara M."/>
            <person name="Thierry A."/>
            <person name="Bouchier C."/>
            <person name="Caudron B."/>
            <person name="Scarpelli C."/>
            <person name="Gaillardin C."/>
            <person name="Weissenbach J."/>
            <person name="Wincker P."/>
            <person name="Souciet J.-L."/>
        </authorList>
    </citation>
    <scope>NUCLEOTIDE SEQUENCE [LARGE SCALE GENOMIC DNA]</scope>
    <source>
        <strain>CLIB 122 / E 150</strain>
    </source>
</reference>
<sequence length="381" mass="42897">MSSVLRLFKIGAPVPNVRVHQLDASLLDAELVDLLKNQLFKGFTNFHPEFRDKYESELVLALKLILFKLTVWDHAITYGGKLQNLKFIDSRHSSKLQIQPSVIQKLGYGILVVGGGYLWSKIEGYLLARSEDDVATDGTSVRGASAARGALKVANFASLLYSAATLGNFVAFLYTGRYATVIMRLLRIRLVPSQRTSSRQVSYEFQNRQLVWNAFTEFLIFILPLLQLPKLKRRIERKLQSLNVTRVGNVEEASEGELAHLPQKTCAICFRDEEEQEGGGGASHYSTDVTNPYQADCGHVYCYVCLVTKLAQGDGDGWNCYRCAKQVQKMKPWVDVDEAAVVGAAEMHEKVDVIEHAEDNEQEEEEFDDDDEDSNFQLMKD</sequence>
<name>PEX2_YARLI</name>
<feature type="chain" id="PRO_0000056374" description="Peroxisomal biogenesis factor 2">
    <location>
        <begin position="1"/>
        <end position="381"/>
    </location>
</feature>
<feature type="topological domain" description="Peroxisomal matrix" evidence="1">
    <location>
        <begin position="1"/>
        <end position="17"/>
    </location>
</feature>
<feature type="transmembrane region" description="Helical; Name=TM1" evidence="1">
    <location>
        <begin position="18"/>
        <end position="44"/>
    </location>
</feature>
<feature type="topological domain" description="Cytoplasmic" evidence="1">
    <location>
        <begin position="45"/>
        <end position="50"/>
    </location>
</feature>
<feature type="transmembrane region" description="Helical; Name=TM2" evidence="1">
    <location>
        <begin position="51"/>
        <end position="76"/>
    </location>
</feature>
<feature type="topological domain" description="Peroxisomal matrix" evidence="1">
    <location>
        <begin position="77"/>
        <end position="100"/>
    </location>
</feature>
<feature type="transmembrane region" description="Helical; Name=TM3" evidence="1">
    <location>
        <begin position="101"/>
        <end position="127"/>
    </location>
</feature>
<feature type="topological domain" description="Cytoplasmic" evidence="1">
    <location>
        <begin position="128"/>
        <end position="140"/>
    </location>
</feature>
<feature type="transmembrane region" description="Helical; Name=TM4" evidence="1">
    <location>
        <begin position="141"/>
        <end position="175"/>
    </location>
</feature>
<feature type="topological domain" description="Peroxisomal matrix" evidence="1">
    <location>
        <begin position="176"/>
        <end position="202"/>
    </location>
</feature>
<feature type="transmembrane region" description="Helical; Name=TM5" evidence="1">
    <location>
        <begin position="203"/>
        <end position="226"/>
    </location>
</feature>
<feature type="topological domain" description="Cytoplasmic" evidence="1">
    <location>
        <begin position="227"/>
        <end position="381"/>
    </location>
</feature>
<feature type="zinc finger region" description="RING-type" evidence="4">
    <location>
        <begin position="266"/>
        <end position="324"/>
    </location>
</feature>
<feature type="region of interest" description="Disordered" evidence="5">
    <location>
        <begin position="355"/>
        <end position="381"/>
    </location>
</feature>
<feature type="compositionally biased region" description="Acidic residues" evidence="5">
    <location>
        <begin position="360"/>
        <end position="374"/>
    </location>
</feature>
<feature type="binding site" evidence="1">
    <location>
        <position position="266"/>
    </location>
    <ligand>
        <name>Zn(2+)</name>
        <dbReference type="ChEBI" id="CHEBI:29105"/>
        <label>1</label>
    </ligand>
</feature>
<feature type="binding site" evidence="1">
    <location>
        <position position="269"/>
    </location>
    <ligand>
        <name>Zn(2+)</name>
        <dbReference type="ChEBI" id="CHEBI:29105"/>
        <label>1</label>
    </ligand>
</feature>
<feature type="binding site" evidence="1">
    <location>
        <position position="297"/>
    </location>
    <ligand>
        <name>Zn(2+)</name>
        <dbReference type="ChEBI" id="CHEBI:29105"/>
        <label>2</label>
    </ligand>
</feature>
<feature type="binding site" evidence="1">
    <location>
        <position position="299"/>
    </location>
    <ligand>
        <name>Zn(2+)</name>
        <dbReference type="ChEBI" id="CHEBI:29105"/>
        <label>2</label>
    </ligand>
</feature>
<feature type="binding site" evidence="1">
    <location>
        <position position="302"/>
    </location>
    <ligand>
        <name>Zn(2+)</name>
        <dbReference type="ChEBI" id="CHEBI:29105"/>
        <label>1</label>
    </ligand>
</feature>
<feature type="binding site" evidence="1">
    <location>
        <position position="305"/>
    </location>
    <ligand>
        <name>Zn(2+)</name>
        <dbReference type="ChEBI" id="CHEBI:29105"/>
        <label>1</label>
    </ligand>
</feature>
<feature type="binding site" evidence="1">
    <location>
        <position position="320"/>
    </location>
    <ligand>
        <name>Zn(2+)</name>
        <dbReference type="ChEBI" id="CHEBI:29105"/>
        <label>2</label>
    </ligand>
</feature>
<feature type="binding site" evidence="1">
    <location>
        <position position="323"/>
    </location>
    <ligand>
        <name>Zn(2+)</name>
        <dbReference type="ChEBI" id="CHEBI:29105"/>
        <label>2</label>
    </ligand>
</feature>
<feature type="sequence conflict" description="In Ref. 1; AAC49423." evidence="6" ref="1">
    <location>
        <position position="177"/>
    </location>
</feature>
<feature type="sequence conflict" description="In Ref. 1; AAC49423." evidence="6" ref="1">
    <original>N</original>
    <variation>T</variation>
    <location>
        <position position="375"/>
    </location>
</feature>
<keyword id="KW-0472">Membrane</keyword>
<keyword id="KW-0479">Metal-binding</keyword>
<keyword id="KW-0576">Peroxisome</keyword>
<keyword id="KW-0653">Protein transport</keyword>
<keyword id="KW-1185">Reference proteome</keyword>
<keyword id="KW-0808">Transferase</keyword>
<keyword id="KW-0812">Transmembrane</keyword>
<keyword id="KW-1133">Transmembrane helix</keyword>
<keyword id="KW-0813">Transport</keyword>
<keyword id="KW-0833">Ubl conjugation pathway</keyword>
<keyword id="KW-0862">Zinc</keyword>
<keyword id="KW-0863">Zinc-finger</keyword>
<comment type="function">
    <text evidence="2">E3 ubiquitin-protein ligase component of a retrotranslocation channel required for peroxisome organization by mediating export of the PEX5 receptor from peroxisomes to the cytosol, thereby promoting PEX5 recycling. The retrotranslocation channel is composed of PEX2, PEX10 and PEX12; each subunit contributing transmembrane segments that coassemble into an open channel that specifically allows the passage of PEX5 through the peroxisomal membrane. PEX2 also regulates peroxisome organization by acting as a E3 ubiquitin-protein ligase. PEX2 ubiquitinates PEX5 during its passage through the retrotranslocation channel: catalyzes monoubiquitination of PEX5 at 'Cys-6', a modification that acts as a signal for PEX5 extraction into the cytosol.</text>
</comment>
<comment type="catalytic activity">
    <reaction evidence="2">
        <text>[E2 ubiquitin-conjugating enzyme]-S-ubiquitinyl-L-cysteine + [acceptor protein]-L-cysteine = [E2 ubiquitin-conjugating enzyme]-L-cysteine + [acceptor protein]-S-ubiquitinyl-L-cysteine.</text>
        <dbReference type="EC" id="2.3.2.36"/>
    </reaction>
</comment>
<comment type="pathway">
    <text evidence="2">Protein modification; protein ubiquitination.</text>
</comment>
<comment type="subunit">
    <text evidence="2">Component of the PEX2-PEX10-PEX12 retrotranslocation channel, composed of PEX2, PEX10 and PEX12.</text>
</comment>
<comment type="subcellular location">
    <subcellularLocation>
        <location evidence="2">Peroxisome membrane</location>
        <topology evidence="3">Multi-pass membrane protein</topology>
    </subcellularLocation>
</comment>
<comment type="domain">
    <text evidence="1">The three subunits of the retrotranslocation channel (PEX2, PEX10 and PEX12) coassemble in the membrane into a channel with an open 10 Angstrom pore. The RING-type zinc-fingers that catalyze PEX5 receptor ubiquitination are positioned above the pore on the cytosolic side of the complex.</text>
</comment>
<comment type="similarity">
    <text evidence="6">Belongs to the pex2/pex10/pex12 family.</text>
</comment>
<organism>
    <name type="scientific">Yarrowia lipolytica (strain CLIB 122 / E 150)</name>
    <name type="common">Yeast</name>
    <name type="synonym">Candida lipolytica</name>
    <dbReference type="NCBI Taxonomy" id="284591"/>
    <lineage>
        <taxon>Eukaryota</taxon>
        <taxon>Fungi</taxon>
        <taxon>Dikarya</taxon>
        <taxon>Ascomycota</taxon>
        <taxon>Saccharomycotina</taxon>
        <taxon>Dipodascomycetes</taxon>
        <taxon>Dipodascales</taxon>
        <taxon>Dipodascales incertae sedis</taxon>
        <taxon>Yarrowia</taxon>
    </lineage>
</organism>
<gene>
    <name type="primary">PEX2</name>
    <name type="synonym">PAY5</name>
    <name type="ordered locus">YALI0F01012g</name>
</gene>
<evidence type="ECO:0000250" key="1">
    <source>
        <dbReference type="UniProtKB" id="G2Q1C9"/>
    </source>
</evidence>
<evidence type="ECO:0000250" key="2">
    <source>
        <dbReference type="UniProtKB" id="P32800"/>
    </source>
</evidence>
<evidence type="ECO:0000255" key="3"/>
<evidence type="ECO:0000255" key="4">
    <source>
        <dbReference type="PROSITE-ProRule" id="PRU00175"/>
    </source>
</evidence>
<evidence type="ECO:0000256" key="5">
    <source>
        <dbReference type="SAM" id="MobiDB-lite"/>
    </source>
</evidence>
<evidence type="ECO:0000305" key="6"/>
<accession>Q99155</accession>
<accession>Q6C3B7</accession>
<protein>
    <recommendedName>
        <fullName evidence="6">Peroxisomal biogenesis factor 2</fullName>
        <ecNumber evidence="2">2.3.2.36</ecNumber>
    </recommendedName>
    <alternativeName>
        <fullName evidence="6">Peroxin-2</fullName>
    </alternativeName>
    <alternativeName>
        <fullName>Peroxisomal protein PAY5</fullName>
    </alternativeName>
</protein>